<comment type="function">
    <text evidence="1">One of the primary rRNA binding proteins, it binds directly to 16S rRNA where it nucleates assembly of the body of the 30S subunit.</text>
</comment>
<comment type="function">
    <text evidence="1">With S5 and S12 plays an important role in translational accuracy.</text>
</comment>
<comment type="subunit">
    <text evidence="1">Part of the 30S ribosomal subunit. Contacts protein S5. The interaction surface between S4 and S5 is involved in control of translational fidelity.</text>
</comment>
<comment type="similarity">
    <text evidence="1">Belongs to the universal ribosomal protein uS4 family.</text>
</comment>
<protein>
    <recommendedName>
        <fullName evidence="1">Small ribosomal subunit protein uS4</fullName>
    </recommendedName>
    <alternativeName>
        <fullName evidence="2">30S ribosomal protein S4</fullName>
    </alternativeName>
</protein>
<feature type="chain" id="PRO_0000132447" description="Small ribosomal subunit protein uS4">
    <location>
        <begin position="1"/>
        <end position="205"/>
    </location>
</feature>
<feature type="domain" description="S4 RNA-binding" evidence="1">
    <location>
        <begin position="94"/>
        <end position="157"/>
    </location>
</feature>
<evidence type="ECO:0000255" key="1">
    <source>
        <dbReference type="HAMAP-Rule" id="MF_01306"/>
    </source>
</evidence>
<evidence type="ECO:0000305" key="2"/>
<accession>Q9ZDI3</accession>
<sequence length="205" mass="23318">MTKIVRSKYKASRRLGVSLWGDSKDAFNTRNYRPGQHGQNTMIKTSDYGLHLKAKQRLKCYYGRVTEKQFRNIFALAQRMKGNTGENFIGLLESRLDTVVYRMNIAPTIFAARQLVSHGHIKLNGKKADIASIRLKEGDIIEIKESIQQIPLIQESISKQGQTTPGYLSFDIPSLTGKYLRVPALSDVPYPFEAEVHLVIELYSR</sequence>
<reference key="1">
    <citation type="journal article" date="1998" name="Nature">
        <title>The genome sequence of Rickettsia prowazekii and the origin of mitochondria.</title>
        <authorList>
            <person name="Andersson S.G.E."/>
            <person name="Zomorodipour A."/>
            <person name="Andersson J.O."/>
            <person name="Sicheritz-Ponten T."/>
            <person name="Alsmark U.C.M."/>
            <person name="Podowski R.M."/>
            <person name="Naeslund A.K."/>
            <person name="Eriksson A.-S."/>
            <person name="Winkler H.H."/>
            <person name="Kurland C.G."/>
        </authorList>
    </citation>
    <scope>NUCLEOTIDE SEQUENCE [LARGE SCALE GENOMIC DNA]</scope>
    <source>
        <strain>Madrid E</strain>
    </source>
</reference>
<proteinExistence type="inferred from homology"/>
<keyword id="KW-1185">Reference proteome</keyword>
<keyword id="KW-0687">Ribonucleoprotein</keyword>
<keyword id="KW-0689">Ribosomal protein</keyword>
<keyword id="KW-0694">RNA-binding</keyword>
<keyword id="KW-0699">rRNA-binding</keyword>
<organism>
    <name type="scientific">Rickettsia prowazekii (strain Madrid E)</name>
    <dbReference type="NCBI Taxonomy" id="272947"/>
    <lineage>
        <taxon>Bacteria</taxon>
        <taxon>Pseudomonadati</taxon>
        <taxon>Pseudomonadota</taxon>
        <taxon>Alphaproteobacteria</taxon>
        <taxon>Rickettsiales</taxon>
        <taxon>Rickettsiaceae</taxon>
        <taxon>Rickettsieae</taxon>
        <taxon>Rickettsia</taxon>
        <taxon>typhus group</taxon>
    </lineage>
</organism>
<name>RS4_RICPR</name>
<gene>
    <name evidence="1" type="primary">rpsD</name>
    <name type="ordered locus">RP345</name>
</gene>
<dbReference type="EMBL" id="AJ235271">
    <property type="protein sequence ID" value="CAA14805.1"/>
    <property type="molecule type" value="Genomic_DNA"/>
</dbReference>
<dbReference type="PIR" id="C71691">
    <property type="entry name" value="C71691"/>
</dbReference>
<dbReference type="RefSeq" id="NP_220728.1">
    <property type="nucleotide sequence ID" value="NC_000963.1"/>
</dbReference>
<dbReference type="RefSeq" id="WP_004597472.1">
    <property type="nucleotide sequence ID" value="NC_000963.1"/>
</dbReference>
<dbReference type="SMR" id="Q9ZDI3"/>
<dbReference type="STRING" id="272947.gene:17555425"/>
<dbReference type="EnsemblBacteria" id="CAA14805">
    <property type="protein sequence ID" value="CAA14805"/>
    <property type="gene ID" value="CAA14805"/>
</dbReference>
<dbReference type="GeneID" id="57569471"/>
<dbReference type="KEGG" id="rpr:RP345"/>
<dbReference type="PATRIC" id="fig|272947.5.peg.355"/>
<dbReference type="eggNOG" id="COG0522">
    <property type="taxonomic scope" value="Bacteria"/>
</dbReference>
<dbReference type="HOGENOM" id="CLU_092403_0_0_5"/>
<dbReference type="OrthoDB" id="9803672at2"/>
<dbReference type="Proteomes" id="UP000002480">
    <property type="component" value="Chromosome"/>
</dbReference>
<dbReference type="GO" id="GO:0015935">
    <property type="term" value="C:small ribosomal subunit"/>
    <property type="evidence" value="ECO:0007669"/>
    <property type="project" value="InterPro"/>
</dbReference>
<dbReference type="GO" id="GO:0019843">
    <property type="term" value="F:rRNA binding"/>
    <property type="evidence" value="ECO:0007669"/>
    <property type="project" value="UniProtKB-UniRule"/>
</dbReference>
<dbReference type="GO" id="GO:0003735">
    <property type="term" value="F:structural constituent of ribosome"/>
    <property type="evidence" value="ECO:0007669"/>
    <property type="project" value="InterPro"/>
</dbReference>
<dbReference type="GO" id="GO:0042274">
    <property type="term" value="P:ribosomal small subunit biogenesis"/>
    <property type="evidence" value="ECO:0007669"/>
    <property type="project" value="TreeGrafter"/>
</dbReference>
<dbReference type="GO" id="GO:0006412">
    <property type="term" value="P:translation"/>
    <property type="evidence" value="ECO:0007669"/>
    <property type="project" value="UniProtKB-UniRule"/>
</dbReference>
<dbReference type="CDD" id="cd00165">
    <property type="entry name" value="S4"/>
    <property type="match status" value="1"/>
</dbReference>
<dbReference type="FunFam" id="3.10.290.10:FF:000001">
    <property type="entry name" value="30S ribosomal protein S4"/>
    <property type="match status" value="1"/>
</dbReference>
<dbReference type="Gene3D" id="1.10.1050.10">
    <property type="entry name" value="Ribosomal Protein S4 Delta 41, Chain A, domain 1"/>
    <property type="match status" value="1"/>
</dbReference>
<dbReference type="Gene3D" id="3.10.290.10">
    <property type="entry name" value="RNA-binding S4 domain"/>
    <property type="match status" value="1"/>
</dbReference>
<dbReference type="HAMAP" id="MF_01306_B">
    <property type="entry name" value="Ribosomal_uS4_B"/>
    <property type="match status" value="1"/>
</dbReference>
<dbReference type="InterPro" id="IPR022801">
    <property type="entry name" value="Ribosomal_uS4"/>
</dbReference>
<dbReference type="InterPro" id="IPR005709">
    <property type="entry name" value="Ribosomal_uS4_bac-type"/>
</dbReference>
<dbReference type="InterPro" id="IPR018079">
    <property type="entry name" value="Ribosomal_uS4_CS"/>
</dbReference>
<dbReference type="InterPro" id="IPR001912">
    <property type="entry name" value="Ribosomal_uS4_N"/>
</dbReference>
<dbReference type="InterPro" id="IPR002942">
    <property type="entry name" value="S4_RNA-bd"/>
</dbReference>
<dbReference type="InterPro" id="IPR036986">
    <property type="entry name" value="S4_RNA-bd_sf"/>
</dbReference>
<dbReference type="NCBIfam" id="NF003717">
    <property type="entry name" value="PRK05327.1"/>
    <property type="match status" value="1"/>
</dbReference>
<dbReference type="NCBIfam" id="TIGR01017">
    <property type="entry name" value="rpsD_bact"/>
    <property type="match status" value="1"/>
</dbReference>
<dbReference type="PANTHER" id="PTHR11831">
    <property type="entry name" value="30S 40S RIBOSOMAL PROTEIN"/>
    <property type="match status" value="1"/>
</dbReference>
<dbReference type="PANTHER" id="PTHR11831:SF4">
    <property type="entry name" value="SMALL RIBOSOMAL SUBUNIT PROTEIN US4M"/>
    <property type="match status" value="1"/>
</dbReference>
<dbReference type="Pfam" id="PF00163">
    <property type="entry name" value="Ribosomal_S4"/>
    <property type="match status" value="1"/>
</dbReference>
<dbReference type="Pfam" id="PF01479">
    <property type="entry name" value="S4"/>
    <property type="match status" value="1"/>
</dbReference>
<dbReference type="SMART" id="SM01390">
    <property type="entry name" value="Ribosomal_S4"/>
    <property type="match status" value="1"/>
</dbReference>
<dbReference type="SMART" id="SM00363">
    <property type="entry name" value="S4"/>
    <property type="match status" value="1"/>
</dbReference>
<dbReference type="SUPFAM" id="SSF55174">
    <property type="entry name" value="Alpha-L RNA-binding motif"/>
    <property type="match status" value="1"/>
</dbReference>
<dbReference type="PROSITE" id="PS00632">
    <property type="entry name" value="RIBOSOMAL_S4"/>
    <property type="match status" value="1"/>
</dbReference>
<dbReference type="PROSITE" id="PS50889">
    <property type="entry name" value="S4"/>
    <property type="match status" value="1"/>
</dbReference>